<comment type="function">
    <molecule>Capsid protein VP1</molecule>
    <text evidence="4">Capsid proteins VP1, VP2, and VP3 form a closed capsid enclosing the viral positive strand RNA genome. All these proteins contain a beta-sheet structure called beta-barrel jelly roll. Together they form an icosahedral capsid (T=3) composed of 60 copies of each VP1, VP2, and VP3, with a diameter of approximately 300 Angstroms. VP1 is situated at the 12 fivefold axes, whereas VP2 and VP3 are located at the quasi-sixfold axes. The naked capsid interacts with the host receptor HAVCR1 to provide virion attachment to and probably entry into the target cell.</text>
</comment>
<comment type="function">
    <molecule>Capsid protein VP2</molecule>
    <text evidence="4">Capsid proteins VP1, VP2, and VP3 form a closed capsid enclosing the viral positive strand RNA genome. All these proteins contain a beta-sheet structure called beta-barrel jelly roll. Together they form an icosahedral capsid (T=3) composed of 60 copies of each VP1, VP2, and VP3, with a diameter of approximately 300 Angstroms. VP1 is situated at the 12 fivefold axes, whereas VP2 and VP3 are located at the quasi-sixfold axes. The naked capsid interacts with the host receptor HAVCR1 to provide virion attachment to and probably entry into the target cell.</text>
</comment>
<comment type="function">
    <molecule>Capsid protein VP3</molecule>
    <text evidence="4">Capsid proteins VP1, VP2, and VP3 form a closed capsid enclosing the viral positive strand RNA genome. All these proteins contain a beta-sheet structure called beta-barrel jelly roll. Together they form an icosahedral capsid (T=3) composed of 60 copies of each VP1, VP2, and VP3, with a diameter of approximately 300 Angstroms. VP1 is situated at the 12 fivefold axes, whereas VP2 and VP3 are located at the quasi-sixfold axes. The naked capsid interacts with the host receptor HAVCR1 to provide virion attachment to and probably entry into the target cell.</text>
</comment>
<comment type="function">
    <molecule>Capsid protein VP0</molecule>
    <text evidence="4">VP0 precursor is a component of the immature procapsids.</text>
</comment>
<comment type="function">
    <molecule>Capsid protein VP4</molecule>
    <text evidence="4">Plays a role in the assembly of the 12 pentamers into an icosahedral structure. Has not been detected in mature virions, supposedly owing to its small size.</text>
</comment>
<comment type="function">
    <molecule>Protein VP1-2A</molecule>
    <text evidence="4">Precursor component of immature procapsids that corresponds to an extended form of the structural protein VP1. After maturation, possibly by the host Cathepsin L, the assembly signal 2A is cleaved to give rise to the mature VP1 protein.</text>
</comment>
<comment type="function">
    <molecule>Protein 2B</molecule>
    <text evidence="4">Functions as a viroporin. Affects membrane integrity and causes an increase in membrane permeability. Involved in host intracellular membrane rearrangements probably to give rise to the viral factories. Does not disrupt calcium homeostasis or glycoprotein trafficking. Antagonizes the innate immune response of the host by suppressing IFN-beta synthesis, which it achieves by interfering with the RIG-I/IFIH1 pathway.</text>
</comment>
<comment type="function">
    <molecule>Protein 2BC</molecule>
    <text evidence="4">Affects membrane integrity and causes an increase in membrane permeability.</text>
</comment>
<comment type="function">
    <molecule>Protein 2C</molecule>
    <text evidence="4">Associates with and induces structural rearrangements of intracellular membranes. Displays RNA-binding activity.</text>
</comment>
<comment type="function">
    <molecule>Protein 3ABC</molecule>
    <text evidence="4">The precursor 3ABC is targeted to the mitochondrial membrane where protease 3C activity cleaves and inhibits the host antiviral protein MAVS, thereby disrupting activation of IRF3 through the IFIH1/MDA5 pathway. In vivo, the protease activity of 3ABC precursor is more efficient in cleaving the 2BC precursor than that of protein 3C. The 3ABC precursor may therefore play a role in the proteolytic processing of the polyprotein. Possible viroporin.</text>
</comment>
<comment type="function">
    <molecule>Protein 3AB</molecule>
    <text evidence="4">Interacts with the 3CD precursor and with RNA structures found at both the 5'- and 3'-termini of the viral genome. Since the 3AB precursor contains the hydrophobic domain 3A, it probably anchors the whole viral replicase complex to intracellular membranes on which viral RNA synthesis occurs.</text>
</comment>
<comment type="function">
    <molecule>Protein 3A</molecule>
    <text evidence="4">May serve as membrane anchor to the 3AB and 3ABC precursors via its hydrophobic domain. May interact with RNA.</text>
</comment>
<comment type="function">
    <molecule>Viral protein genome-linked</molecule>
    <text evidence="2 4">Acts as a primer for viral RNA replication and remains covalently bound to viral genomic RNA. VPg is uridylylated prior to priming replication into VPg-pUpU. The VPg-pUpU is then used as primer on the genomic RNA poly(A) by the RNA-dependent RNA polymerase to replicate the viral genome.</text>
</comment>
<comment type="function">
    <molecule>Protease 3C</molecule>
    <text evidence="4">Cysteine protease that generates mature viral proteins from the precursor polyprotein. In addition to its proteolytic activity, it binds to viral RNA, and thus influences viral genome replication. RNA and substrate bind cooperatively to the protease. Cleaves IKBKG/NEMO to impair innate immune signaling. Cleaves host PABPC1 which may participate in the switch of viral translation to RNA synthesis.</text>
</comment>
<comment type="function">
    <molecule>Protein 3CD</molecule>
    <text evidence="4">Interacts with the 3AB precursor and with RNA structures found at both the 5'- and 3'-termini of the viral genome. Disrupts TLR3 signaling by degrading the host adapter protein TICAM1/TRIF.</text>
</comment>
<comment type="function">
    <text evidence="4">RNA-directed RNA polymerase 3D-POL replicates genomic and antigenomic RNA by recognizing replications specific signals.</text>
</comment>
<comment type="catalytic activity">
    <reaction evidence="4 6">
        <text>RNA(n) + a ribonucleoside 5'-triphosphate = RNA(n+1) + diphosphate</text>
        <dbReference type="Rhea" id="RHEA:21248"/>
        <dbReference type="Rhea" id="RHEA-COMP:14527"/>
        <dbReference type="Rhea" id="RHEA-COMP:17342"/>
        <dbReference type="ChEBI" id="CHEBI:33019"/>
        <dbReference type="ChEBI" id="CHEBI:61557"/>
        <dbReference type="ChEBI" id="CHEBI:140395"/>
        <dbReference type="EC" id="2.7.7.48"/>
    </reaction>
</comment>
<comment type="catalytic activity">
    <reaction evidence="4">
        <text>a ribonucleoside 5'-triphosphate + H2O = a ribonucleoside 5'-diphosphate + phosphate + H(+)</text>
        <dbReference type="Rhea" id="RHEA:23680"/>
        <dbReference type="ChEBI" id="CHEBI:15377"/>
        <dbReference type="ChEBI" id="CHEBI:15378"/>
        <dbReference type="ChEBI" id="CHEBI:43474"/>
        <dbReference type="ChEBI" id="CHEBI:57930"/>
        <dbReference type="ChEBI" id="CHEBI:61557"/>
        <dbReference type="EC" id="3.6.1.15"/>
    </reaction>
</comment>
<comment type="catalytic activity">
    <reaction evidence="8">
        <text>Selective cleavage of Gln-|-Gly bond in the poliovirus polyprotein. In other picornavirus reactions Glu may be substituted for Gln, and Ser or Thr for Gly.</text>
        <dbReference type="EC" id="3.4.22.28"/>
    </reaction>
</comment>
<comment type="subunit">
    <molecule>Protein 2B</molecule>
    <text evidence="4">Homodimer. Homomultimer; probably interacts with membranes in a multimeric form. Seems to assemble into amyloid-like fibers.</text>
</comment>
<comment type="subunit">
    <molecule>Protein 3AB</molecule>
    <text evidence="4">Homodimer. Monomer. Interacts with protein 3CD.</text>
</comment>
<comment type="subunit">
    <molecule>Protein 3A</molecule>
    <text evidence="4">Interacts with host ACBD3 (By similarity).</text>
</comment>
<comment type="subunit">
    <molecule>Protein 3CD</molecule>
    <text evidence="4">Interacts with protein 3AB.</text>
</comment>
<comment type="subunit">
    <molecule>Protein 3ABC</molecule>
    <text evidence="4">Interacts with human MAVS.</text>
</comment>
<comment type="subunit">
    <molecule>Protease 3C</molecule>
    <text evidence="4">Homodimer; disulfide-linked.</text>
</comment>
<comment type="subunit">
    <molecule>Protein VP1-2A</molecule>
    <text evidence="4">Homopentamer. Homooligomer.</text>
</comment>
<comment type="subunit">
    <molecule>Capsid protein VP1</molecule>
    <text evidence="4">Interacts with capsid protein VP2. Interacts with capsid protein VP3.</text>
</comment>
<comment type="subunit">
    <molecule>Capsid protein VP2</molecule>
    <text evidence="4">Interacts with capsid protein VP1. Interacts with capsid protein VP3.</text>
</comment>
<comment type="subunit">
    <molecule>Capsid protein VP3</molecule>
    <text evidence="4">Interacts with capsid protein VP1. Interacts with capsid protein VP2.</text>
</comment>
<comment type="subcellular location">
    <molecule>Capsid protein VP2</molecule>
    <subcellularLocation>
        <location evidence="4">Virion</location>
    </subcellularLocation>
    <subcellularLocation>
        <location evidence="4">Host endosome</location>
        <location evidence="4">Host multivesicular body</location>
    </subcellularLocation>
    <text evidence="4">The egress of newly formed virions occurs through an exosome-like mechanism involving endosomal budding of viral capsids into multivesicular bodies.</text>
</comment>
<comment type="subcellular location">
    <molecule>Capsid protein VP3</molecule>
    <subcellularLocation>
        <location evidence="4">Virion</location>
    </subcellularLocation>
    <subcellularLocation>
        <location evidence="4">Host endosome</location>
        <location evidence="4">Host multivesicular body</location>
    </subcellularLocation>
    <text evidence="4">The egress of newly formed virions occurs through an exosome-like mechanism involving endosomal budding of viral capsids into multivesicular bodies.</text>
</comment>
<comment type="subcellular location">
    <molecule>Capsid protein VP1</molecule>
    <subcellularLocation>
        <location evidence="4">Virion</location>
    </subcellularLocation>
    <subcellularLocation>
        <location evidence="4">Host endosome</location>
        <location evidence="4">Host multivesicular body</location>
    </subcellularLocation>
    <text evidence="4">The egress of newly formed virions occurs through an exosome-like mechanism involving endosomal budding of viral capsids into multivesicular bodies.</text>
</comment>
<comment type="subcellular location">
    <molecule>Capsid protein VP4</molecule>
    <subcellularLocation>
        <location evidence="4">Virion</location>
    </subcellularLocation>
    <text evidence="4">Present in the full mature virion. The egress of newly formed virions occurs through an exosome-like mechanism involving endosomal budding of viral capsids into multivesicular bodies.</text>
</comment>
<comment type="subcellular location">
    <molecule>Protein 2B</molecule>
    <subcellularLocation>
        <location evidence="4">Host membrane</location>
        <topology evidence="4">Peripheral membrane protein</topology>
    </subcellularLocation>
    <text evidence="4">Probably localizes to intracellular membrane vesicles that are induced after virus infection as the site for viral RNA replication.</text>
</comment>
<comment type="subcellular location">
    <molecule>Protein 2C</molecule>
    <subcellularLocation>
        <location evidence="4">Host membrane</location>
        <topology evidence="4">Single-pass membrane protein</topology>
    </subcellularLocation>
    <text evidence="4">Probably localizes to intracellular membrane vesicles that are induced after virus infection as the site for viral RNA replication. May associate with membranes through a N-terminal amphipathic helix.</text>
</comment>
<comment type="subcellular location">
    <molecule>Protein 3ABC</molecule>
    <subcellularLocation>
        <location evidence="4">Host membrane</location>
        <topology evidence="5">Single-pass membrane protein</topology>
    </subcellularLocation>
    <subcellularLocation>
        <location evidence="4">Host mitochondrion outer membrane</location>
        <topology evidence="4">Single-pass membrane protein</topology>
    </subcellularLocation>
    <text evidence="4">Probably localizes to intracellular membrane vesicles that are induced after virus infection as the site for viral RNA replication.</text>
</comment>
<comment type="subcellular location">
    <molecule>Protein 3AB</molecule>
    <subcellularLocation>
        <location evidence="4">Host membrane</location>
        <topology evidence="5">Single-pass membrane protein</topology>
    </subcellularLocation>
    <text evidence="4">Probably localizes to intracellular membrane vesicles that are induced after virus infection as the site for viral RNA replication.</text>
</comment>
<comment type="subcellular location">
    <molecule>Protein 3A</molecule>
    <subcellularLocation>
        <location evidence="4">Host membrane</location>
        <topology evidence="5">Single-pass membrane protein</topology>
    </subcellularLocation>
    <text evidence="4">Probably localizes to intracellular membrane vesicles that are induced after virus infection as the site for viral RNA replication.</text>
</comment>
<comment type="subcellular location">
    <molecule>Viral protein genome-linked</molecule>
    <subcellularLocation>
        <location evidence="4">Virion</location>
    </subcellularLocation>
</comment>
<comment type="subcellular location">
    <molecule>Protease 3C</molecule>
    <subcellularLocation>
        <location evidence="4">Host cytoplasm</location>
    </subcellularLocation>
</comment>
<comment type="subcellular location">
    <molecule>RNA-directed RNA polymerase 3D-POL</molecule>
    <subcellularLocation>
        <location evidence="4">Host cytoplasmic vesicle membrane</location>
        <topology evidence="4">Peripheral membrane protein</topology>
        <orientation evidence="4">Cytoplasmic side</orientation>
    </subcellularLocation>
    <text evidence="4">Interacts with membranes in a complex with viral protein 3AB. Probably localizes to the surface of intracellular membrane vesicles that are induced after virus infection as the site for viral RNA replication. These vesicles are derived from the endoplasmic reticulum.</text>
</comment>
<comment type="domain">
    <molecule>Protein VP1-2A</molecule>
    <text evidence="4">The assembly signal 2A region mediates pentamerization of P1-2A.</text>
</comment>
<comment type="domain">
    <molecule>Genome polyprotein</molecule>
    <text evidence="4">Late-budding domains (L domains) are short sequence motifs essential for viral particle budding. They recruit proteins of the host ESCRT machinery (Endosomal Sorting Complex Required for Transport) or ESCRT-associated proteins. The genome polyprotein contains two L domains: a tandem of (L)YPX(n)L domain which is known to bind the PDCD6IP/ALIX adaptater protein.</text>
</comment>
<comment type="domain">
    <molecule>Capsid protein VP2</molecule>
    <text evidence="4">Late-budding domains (L domains) are short sequence motifs essential for viral particle budding. They recruit proteins of the host ESCRT machinery (Endosomal Sorting Complex Required for Transport) or ESCRT-associated proteins. Capsid protein VP2 contains two L domains: a tandem of (L)YPX(n)L domain which is known to bind the Alix adaptater protein.</text>
</comment>
<comment type="domain">
    <molecule>Protein 2B</molecule>
    <text evidence="4">The C-terminus displays a membrane-penetrating ability.</text>
</comment>
<comment type="PTM">
    <molecule>Genome polyprotein</molecule>
    <text evidence="4">Specific enzymatic cleavages by viral protease in vivo yield a variety of precursors and mature proteins. Polyprotein processing intermediates are produced, such as P1-2A which is a functional precursor of the structural proteins, VP0 which is a VP4-VP2 precursor, VP1-2A precursor, 3ABC precursor which is a stable and catalytically active precursor of 3A, 3B and 3C proteins, 3AB and 3CD precursors. The assembly signal 2A is removed from VP1-2A by a host protease, possibly host Cathepsin L. This cleavage occurs over a region of 3 amino-acids probably generating VP1 proteins with heterogeneous C-termini.</text>
</comment>
<comment type="PTM">
    <molecule>Capsid protein VP0</molecule>
    <text evidence="3">During virion maturation, immature virions are rendered infectious following cleavage of VP0 into VP4 and VP2. This maturation seems to be an autocatalytic event triggered by the presence of RNA in the capsid and is followed by a conformational change of the particle.</text>
</comment>
<comment type="PTM">
    <molecule>Protein VP1-2A</molecule>
    <text evidence="4">The assembly signal 2A is removed from VP1-2A by a host protease, possibly host Cathepsin L in naked virions. This cleavage does not occur in enveloped virions. This cleavage occurs over a region of 3 amino-acids probably generating VP1 proteins with heterogeneous C-termini.</text>
</comment>
<comment type="PTM">
    <molecule>Viral protein genome-linked</molecule>
    <text evidence="2">VPg is uridylylated prior to priming replication into VPg-pUpU.</text>
</comment>
<comment type="PTM">
    <molecule>Capsid protein VP4</molecule>
    <text evidence="4">Unlike other picornaviruses, does not seem to be myristoylated.</text>
</comment>
<comment type="miscellaneous">
    <molecule>Genome polyprotein</molecule>
    <text evidence="4">The need for an intact eIF4G factor for the initiation of translation of HAV results in an inability to shut off host protein synthesis by a mechanism similar to that of other picornaviruses.</text>
</comment>
<comment type="miscellaneous">
    <molecule>Genome polyprotein</molecule>
    <text evidence="4">During infection, enveloped virions (eHAV) are released from cells. These eHAV are cloaked in host-derived membranes and resemble exosomes. The membrane of eHAV is devoid of viral proteins and thus prevents their neutralization by antibodies. eHAV budding is dependent on ESCRT-associated proteins VPS4B and PDCD6IP/ALIX. eHAV are produced and released in the serum and plasma, but not in bile and feces which only contain the naked, nonenveloped virions. It is likely that eHAV also use HAVCR1 as a functional receptor to infect cells, an evolutionary trait that may enhance HAV infectivity.</text>
</comment>
<comment type="similarity">
    <text evidence="10">Belongs to the picornaviridae polyprotein family.</text>
</comment>
<comment type="caution">
    <text evidence="4">It is uncertain whether Met-1 or Met-3 is the initiator.</text>
</comment>
<keyword id="KW-0067">ATP-binding</keyword>
<keyword id="KW-0167">Capsid protein</keyword>
<keyword id="KW-0175">Coiled coil</keyword>
<keyword id="KW-0191">Covalent protein-RNA linkage</keyword>
<keyword id="KW-1015">Disulfide bond</keyword>
<keyword id="KW-0347">Helicase</keyword>
<keyword id="KW-1035">Host cytoplasm</keyword>
<keyword id="KW-1036">Host cytoplasmic vesicle</keyword>
<keyword id="KW-1039">Host endosome</keyword>
<keyword id="KW-1043">Host membrane</keyword>
<keyword id="KW-1045">Host mitochondrion</keyword>
<keyword id="KW-1047">Host mitochondrion outer membrane</keyword>
<keyword id="KW-0945">Host-virus interaction</keyword>
<keyword id="KW-0378">Hydrolase</keyword>
<keyword id="KW-1090">Inhibition of host innate immune response by virus</keyword>
<keyword id="KW-1097">Inhibition of host MAVS by virus</keyword>
<keyword id="KW-1113">Inhibition of host RLR pathway by virus</keyword>
<keyword id="KW-0922">Interferon antiviral system evasion</keyword>
<keyword id="KW-0407">Ion channel</keyword>
<keyword id="KW-0406">Ion transport</keyword>
<keyword id="KW-0472">Membrane</keyword>
<keyword id="KW-0547">Nucleotide-binding</keyword>
<keyword id="KW-0548">Nucleotidyltransferase</keyword>
<keyword id="KW-0597">Phosphoprotein</keyword>
<keyword id="KW-0645">Protease</keyword>
<keyword id="KW-0694">RNA-binding</keyword>
<keyword id="KW-0696">RNA-directed RNA polymerase</keyword>
<keyword id="KW-1143">T=pseudo3 icosahedral capsid protein</keyword>
<keyword id="KW-0788">Thiol protease</keyword>
<keyword id="KW-0808">Transferase</keyword>
<keyword id="KW-0812">Transmembrane</keyword>
<keyword id="KW-1133">Transmembrane helix</keyword>
<keyword id="KW-0813">Transport</keyword>
<keyword id="KW-1161">Viral attachment to host cell</keyword>
<keyword id="KW-0899">Viral immunoevasion</keyword>
<keyword id="KW-1182">Viral ion channel</keyword>
<keyword id="KW-0693">Viral RNA replication</keyword>
<keyword id="KW-0946">Virion</keyword>
<keyword id="KW-1160">Virus entry into host cell</keyword>
<accession>P14553</accession>
<organismHost>
    <name type="scientific">Callithrix</name>
    <dbReference type="NCBI Taxonomy" id="9481"/>
</organismHost>
<organismHost>
    <name type="scientific">Cercopithecus hamlyni</name>
    <name type="common">Owl-faced monkey</name>
    <name type="synonym">Hamlyn's monkey</name>
    <dbReference type="NCBI Taxonomy" id="9536"/>
</organismHost>
<organismHost>
    <name type="scientific">Chlorocebus aethiops</name>
    <name type="common">Green monkey</name>
    <name type="synonym">Cercopithecus aethiops</name>
    <dbReference type="NCBI Taxonomy" id="9534"/>
</organismHost>
<organismHost>
    <name type="scientific">Macaca</name>
    <name type="common">macaques</name>
    <dbReference type="NCBI Taxonomy" id="9539"/>
</organismHost>
<organismHost>
    <name type="scientific">Pan troglodytes</name>
    <name type="common">Chimpanzee</name>
    <dbReference type="NCBI Taxonomy" id="9598"/>
</organismHost>
<name>POLG_HAVS2</name>
<evidence type="ECO:0000250" key="1"/>
<evidence type="ECO:0000250" key="2">
    <source>
        <dbReference type="UniProtKB" id="P03300"/>
    </source>
</evidence>
<evidence type="ECO:0000250" key="3">
    <source>
        <dbReference type="UniProtKB" id="P03303"/>
    </source>
</evidence>
<evidence type="ECO:0000250" key="4">
    <source>
        <dbReference type="UniProtKB" id="P08617"/>
    </source>
</evidence>
<evidence type="ECO:0000255" key="5"/>
<evidence type="ECO:0000255" key="6">
    <source>
        <dbReference type="PROSITE-ProRule" id="PRU00539"/>
    </source>
</evidence>
<evidence type="ECO:0000255" key="7">
    <source>
        <dbReference type="PROSITE-ProRule" id="PRU00551"/>
    </source>
</evidence>
<evidence type="ECO:0000255" key="8">
    <source>
        <dbReference type="PROSITE-ProRule" id="PRU01222"/>
    </source>
</evidence>
<evidence type="ECO:0000256" key="9">
    <source>
        <dbReference type="SAM" id="MobiDB-lite"/>
    </source>
</evidence>
<evidence type="ECO:0000305" key="10"/>
<feature type="chain" id="PRO_0000311023" description="Genome polyprotein">
    <location>
        <begin position="1"/>
        <end position="2230"/>
    </location>
</feature>
<feature type="chain" id="PRO_0000311024" description="Capsid protein VP0">
    <location>
        <begin position="1"/>
        <end position="249"/>
    </location>
</feature>
<feature type="chain" id="PRO_0000039979" description="Capsid protein VP4">
    <location>
        <begin position="1"/>
        <end position="27"/>
    </location>
</feature>
<feature type="chain" id="PRO_0000039980" description="Capsid protein VP2">
    <location>
        <begin position="28"/>
        <end position="249"/>
    </location>
</feature>
<feature type="chain" id="PRO_0000039981" description="Capsid protein VP3">
    <location>
        <begin position="250"/>
        <end position="495"/>
    </location>
</feature>
<feature type="chain" id="PRO_0000311025" description="Protein VP1-2A">
    <location>
        <begin position="496"/>
        <end position="840"/>
    </location>
</feature>
<feature type="chain" id="PRO_0000039982" description="Capsid protein VP1">
    <location>
        <begin position="496"/>
        <end position="769"/>
    </location>
</feature>
<feature type="chain" id="PRO_0000039983" description="Assembly signal 2A">
    <location>
        <begin position="770"/>
        <end position="840"/>
    </location>
</feature>
<feature type="chain" id="PRO_0000311026" description="Protein 2BC">
    <location>
        <begin position="841"/>
        <end position="1426"/>
    </location>
</feature>
<feature type="chain" id="PRO_0000039984" description="Protein 2B">
    <location>
        <begin position="841"/>
        <end position="1091"/>
    </location>
</feature>
<feature type="chain" id="PRO_0000039985" description="Protein 2C">
    <location>
        <begin position="1092"/>
        <end position="1426"/>
    </location>
</feature>
<feature type="chain" id="PRO_0000311027" description="Protein 3ABCD">
    <location>
        <begin position="1427"/>
        <end position="2230"/>
    </location>
</feature>
<feature type="chain" id="PRO_0000311028" description="Protein 3ABC">
    <location>
        <begin position="1427"/>
        <end position="1741"/>
    </location>
</feature>
<feature type="chain" id="PRO_0000311029" description="Protein 3AB">
    <location>
        <begin position="1427"/>
        <end position="1521"/>
    </location>
</feature>
<feature type="chain" id="PRO_0000039986" description="Protein 3A">
    <location>
        <begin position="1427"/>
        <end position="1498"/>
    </location>
</feature>
<feature type="chain" id="PRO_0000039987" description="Viral protein genome-linked">
    <location>
        <begin position="1499"/>
        <end position="1521"/>
    </location>
</feature>
<feature type="chain" id="PRO_0000311030" description="Protein 3CD">
    <location>
        <begin position="1522"/>
        <end position="2230"/>
    </location>
</feature>
<feature type="chain" id="PRO_0000039988" description="Protease 3C">
    <location>
        <begin position="1522"/>
        <end position="1741"/>
    </location>
</feature>
<feature type="chain" id="PRO_0000039989" description="RNA-directed RNA polymerase 3D-POL">
    <location>
        <begin position="1742"/>
        <end position="2230"/>
    </location>
</feature>
<feature type="transmembrane region" description="Helical" evidence="5">
    <location>
        <begin position="1015"/>
        <end position="1035"/>
    </location>
</feature>
<feature type="transmembrane region" description="Helical" evidence="5">
    <location>
        <begin position="1466"/>
        <end position="1486"/>
    </location>
</feature>
<feature type="domain" description="SF3 helicase" evidence="7">
    <location>
        <begin position="1208"/>
        <end position="1370"/>
    </location>
</feature>
<feature type="domain" description="Peptidase C3" evidence="8">
    <location>
        <begin position="1516"/>
        <end position="1730"/>
    </location>
</feature>
<feature type="domain" description="RdRp catalytic" evidence="6">
    <location>
        <begin position="1979"/>
        <end position="2100"/>
    </location>
</feature>
<feature type="region of interest" description="Disordered" evidence="9">
    <location>
        <begin position="59"/>
        <end position="80"/>
    </location>
</feature>
<feature type="region of interest" description="Involved in P1-2A pentamerization" evidence="4">
    <location>
        <begin position="770"/>
        <end position="840"/>
    </location>
</feature>
<feature type="region of interest" description="Membrane-penetrating ability" evidence="4">
    <location>
        <begin position="1047"/>
        <end position="1074"/>
    </location>
</feature>
<feature type="coiled-coil region" evidence="5">
    <location>
        <begin position="1131"/>
        <end position="1156"/>
    </location>
</feature>
<feature type="short sequence motif" description="(L)YPX(n)L motif" evidence="4">
    <location>
        <begin position="171"/>
        <end position="175"/>
    </location>
</feature>
<feature type="short sequence motif" description="(L)YPX(n)L motif" evidence="4">
    <location>
        <begin position="204"/>
        <end position="209"/>
    </location>
</feature>
<feature type="active site" description="For protease 3C activity" evidence="8">
    <location>
        <position position="1565"/>
    </location>
</feature>
<feature type="active site" description="For protease 3C activity" evidence="8">
    <location>
        <position position="1605"/>
    </location>
</feature>
<feature type="active site" description="For protease 3C activity" evidence="8">
    <location>
        <position position="1693"/>
    </location>
</feature>
<feature type="binding site" evidence="7">
    <location>
        <begin position="1234"/>
        <end position="1241"/>
    </location>
    <ligand>
        <name>ATP</name>
        <dbReference type="ChEBI" id="CHEBI:30616"/>
    </ligand>
</feature>
<feature type="site" description="Cleavage" evidence="5">
    <location>
        <begin position="27"/>
        <end position="28"/>
    </location>
</feature>
<feature type="site" description="Cleavage; by protease 3C" evidence="4">
    <location>
        <begin position="249"/>
        <end position="250"/>
    </location>
</feature>
<feature type="site" description="Cleavage; by protease 3C" evidence="4">
    <location>
        <begin position="495"/>
        <end position="496"/>
    </location>
</feature>
<feature type="site" description="Cleavage; partial; by host" evidence="4">
    <location>
        <begin position="769"/>
        <end position="770"/>
    </location>
</feature>
<feature type="site" description="Important for VP1 folding and capsid assembly" evidence="4">
    <location>
        <position position="773"/>
    </location>
</feature>
<feature type="site" description="Cleavage; by protease 3C" evidence="4">
    <location>
        <begin position="840"/>
        <end position="841"/>
    </location>
</feature>
<feature type="site" description="Cleavage; by protease 3C" evidence="4">
    <location>
        <begin position="1091"/>
        <end position="1092"/>
    </location>
</feature>
<feature type="site" description="Cleavage; by protease 3C" evidence="4">
    <location>
        <begin position="1426"/>
        <end position="1427"/>
    </location>
</feature>
<feature type="site" description="Cleavage; by protease 3C" evidence="4">
    <location>
        <begin position="1498"/>
        <end position="1499"/>
    </location>
</feature>
<feature type="site" description="Cleavage; by protease 3C" evidence="4">
    <location>
        <begin position="1521"/>
        <end position="1522"/>
    </location>
</feature>
<feature type="site" description="Cleavage; by protease 3C" evidence="4">
    <location>
        <begin position="1741"/>
        <end position="1742"/>
    </location>
</feature>
<feature type="modified residue" description="O-(5'-phospho-RNA)-tyrosine" evidence="1">
    <location>
        <position position="1501"/>
    </location>
</feature>
<feature type="disulfide bond" description="Interchain" evidence="4">
    <location>
        <position position="1545"/>
    </location>
</feature>
<reference key="1">
    <citation type="journal article" date="1991" name="J. Gen. Virol.">
        <title>Simian hepatitis A virus (HAV) strain AGM-27: comparison of genome structure and growth in cell culture with other HAV strains.</title>
        <authorList>
            <person name="Tsarev S.A."/>
            <person name="Emerson S.U."/>
            <person name="Balayan M.S."/>
            <person name="Ticehurst J.R."/>
            <person name="Purcell R.H."/>
        </authorList>
    </citation>
    <scope>NUCLEOTIDE SEQUENCE [GENOMIC RNA]</scope>
</reference>
<reference key="2">
    <citation type="journal article" date="1989" name="FEBS Lett.">
        <title>Variations in genome fragments coding for RNA polymerase in human and simian hepatitis A viruses.</title>
        <authorList>
            <person name="Balayan M.S."/>
            <person name="Kusov Y.Y."/>
            <person name="Andjaparidze A.G."/>
            <person name="Tsarev S.A."/>
            <person name="Sverdlov E.D."/>
            <person name="Chizhikov V.E."/>
            <person name="Blinov V.M."/>
            <person name="Vasilenko S.K."/>
        </authorList>
    </citation>
    <scope>NUCLEOTIDE SEQUENCE [GENOMIC RNA] OF 1750-2164</scope>
</reference>
<organism>
    <name type="scientific">Simian hepatitis A virus genotype V (isolate AGM-27)</name>
    <name type="common">SHAV</name>
    <name type="synonym">Simian hepatitis A virus (isolate Cercopithecus/Kenya/AGM-27/1985)</name>
    <dbReference type="NCBI Taxonomy" id="12102"/>
    <lineage>
        <taxon>Viruses</taxon>
        <taxon>Riboviria</taxon>
        <taxon>Orthornavirae</taxon>
        <taxon>Pisuviricota</taxon>
        <taxon>Pisoniviricetes</taxon>
        <taxon>Picornavirales</taxon>
        <taxon>Picornaviridae</taxon>
        <taxon>Heptrevirinae</taxon>
        <taxon>Hepatovirus</taxon>
        <taxon>Hepatovirus ahepa</taxon>
        <taxon>Hepatovirus A</taxon>
    </lineage>
</organism>
<protein>
    <recommendedName>
        <fullName>Genome polyprotein</fullName>
    </recommendedName>
    <component>
        <recommendedName>
            <fullName>Capsid protein VP0</fullName>
        </recommendedName>
        <alternativeName>
            <fullName>VP4-VP2</fullName>
        </alternativeName>
    </component>
    <component>
        <recommendedName>
            <fullName>Capsid protein VP4</fullName>
        </recommendedName>
        <alternativeName>
            <fullName>P1A</fullName>
        </alternativeName>
        <alternativeName>
            <fullName>Virion protein 4</fullName>
        </alternativeName>
    </component>
    <component>
        <recommendedName>
            <fullName>Capsid protein VP2</fullName>
        </recommendedName>
        <alternativeName>
            <fullName>P1B</fullName>
        </alternativeName>
        <alternativeName>
            <fullName>Virion protein 2</fullName>
        </alternativeName>
    </component>
    <component>
        <recommendedName>
            <fullName>Capsid protein VP3</fullName>
        </recommendedName>
        <alternativeName>
            <fullName>P1C</fullName>
        </alternativeName>
        <alternativeName>
            <fullName>Virion protein 3</fullName>
        </alternativeName>
    </component>
    <component>
        <recommendedName>
            <fullName>Protein VP1-2A</fullName>
        </recommendedName>
        <alternativeName>
            <fullName>VPX</fullName>
        </alternativeName>
    </component>
    <component>
        <recommendedName>
            <fullName>Capsid protein VP1</fullName>
        </recommendedName>
        <alternativeName>
            <fullName>P1D</fullName>
        </alternativeName>
        <alternativeName>
            <fullName>Virion protein 1</fullName>
        </alternativeName>
    </component>
    <component>
        <recommendedName>
            <fullName>Assembly signal 2A</fullName>
        </recommendedName>
        <alternativeName>
            <fullName evidence="4">pX</fullName>
        </alternativeName>
    </component>
    <component>
        <recommendedName>
            <fullName>Protein 2BC</fullName>
        </recommendedName>
    </component>
    <component>
        <recommendedName>
            <fullName>Protein 2B</fullName>
            <shortName>P2B</shortName>
        </recommendedName>
    </component>
    <component>
        <recommendedName>
            <fullName>Protein 2C</fullName>
            <shortName>P2C</shortName>
            <ecNumber>3.6.1.15</ecNumber>
        </recommendedName>
    </component>
    <component>
        <recommendedName>
            <fullName>Protein 3ABCD</fullName>
            <shortName>P3</shortName>
        </recommendedName>
    </component>
    <component>
        <recommendedName>
            <fullName>Protein 3ABC</fullName>
        </recommendedName>
    </component>
    <component>
        <recommendedName>
            <fullName>Protein 3AB</fullName>
        </recommendedName>
    </component>
    <component>
        <recommendedName>
            <fullName>Protein 3A</fullName>
            <shortName>P3A</shortName>
        </recommendedName>
    </component>
    <component>
        <recommendedName>
            <fullName>Viral protein genome-linked</fullName>
            <shortName>VPg</shortName>
        </recommendedName>
        <alternativeName>
            <fullName>Protein 3B</fullName>
            <shortName>P3B</shortName>
        </alternativeName>
    </component>
    <component>
        <recommendedName>
            <fullName>Protein 3CD</fullName>
        </recommendedName>
    </component>
    <component>
        <recommendedName>
            <fullName>Protease 3C</fullName>
            <shortName>P3C</shortName>
            <ecNumber evidence="4">3.4.22.28</ecNumber>
        </recommendedName>
        <alternativeName>
            <fullName>Picornain 3C</fullName>
        </alternativeName>
    </component>
    <component>
        <recommendedName>
            <fullName>RNA-directed RNA polymerase 3D-POL</fullName>
            <shortName>P3D-POL</shortName>
            <ecNumber evidence="4">2.7.7.48</ecNumber>
        </recommendedName>
    </component>
</protein>
<dbReference type="EC" id="3.6.1.15"/>
<dbReference type="EC" id="3.4.22.28" evidence="4"/>
<dbReference type="EC" id="2.7.7.48" evidence="4"/>
<dbReference type="EMBL" id="D00924">
    <property type="protein sequence ID" value="BAA00766.1"/>
    <property type="molecule type" value="Genomic_RNA"/>
</dbReference>
<dbReference type="EMBL" id="X15461">
    <property type="protein sequence ID" value="CAA33490.1"/>
    <property type="molecule type" value="Genomic_RNA"/>
</dbReference>
<dbReference type="PIR" id="A30470">
    <property type="entry name" value="GNNYSA"/>
</dbReference>
<dbReference type="SMR" id="P14553"/>
<dbReference type="MEROPS" id="C03.005"/>
<dbReference type="Proteomes" id="UP000008613">
    <property type="component" value="Genome"/>
</dbReference>
<dbReference type="GO" id="GO:0044162">
    <property type="term" value="C:host cell cytoplasmic vesicle membrane"/>
    <property type="evidence" value="ECO:0007669"/>
    <property type="project" value="UniProtKB-SubCell"/>
</dbReference>
<dbReference type="GO" id="GO:0044193">
    <property type="term" value="C:host cell mitochondrial outer membrane"/>
    <property type="evidence" value="ECO:0007669"/>
    <property type="project" value="UniProtKB-SubCell"/>
</dbReference>
<dbReference type="GO" id="GO:0072494">
    <property type="term" value="C:host multivesicular body"/>
    <property type="evidence" value="ECO:0007669"/>
    <property type="project" value="UniProtKB-SubCell"/>
</dbReference>
<dbReference type="GO" id="GO:0016020">
    <property type="term" value="C:membrane"/>
    <property type="evidence" value="ECO:0007669"/>
    <property type="project" value="UniProtKB-KW"/>
</dbReference>
<dbReference type="GO" id="GO:0039618">
    <property type="term" value="C:T=pseudo3 icosahedral viral capsid"/>
    <property type="evidence" value="ECO:0007669"/>
    <property type="project" value="UniProtKB-KW"/>
</dbReference>
<dbReference type="GO" id="GO:0005524">
    <property type="term" value="F:ATP binding"/>
    <property type="evidence" value="ECO:0007669"/>
    <property type="project" value="UniProtKB-KW"/>
</dbReference>
<dbReference type="GO" id="GO:0015267">
    <property type="term" value="F:channel activity"/>
    <property type="evidence" value="ECO:0007669"/>
    <property type="project" value="UniProtKB-KW"/>
</dbReference>
<dbReference type="GO" id="GO:0004197">
    <property type="term" value="F:cysteine-type endopeptidase activity"/>
    <property type="evidence" value="ECO:0007669"/>
    <property type="project" value="UniProtKB-EC"/>
</dbReference>
<dbReference type="GO" id="GO:0017111">
    <property type="term" value="F:ribonucleoside triphosphate phosphatase activity"/>
    <property type="evidence" value="ECO:0007669"/>
    <property type="project" value="UniProtKB-EC"/>
</dbReference>
<dbReference type="GO" id="GO:0003723">
    <property type="term" value="F:RNA binding"/>
    <property type="evidence" value="ECO:0007669"/>
    <property type="project" value="UniProtKB-KW"/>
</dbReference>
<dbReference type="GO" id="GO:0003724">
    <property type="term" value="F:RNA helicase activity"/>
    <property type="evidence" value="ECO:0007669"/>
    <property type="project" value="InterPro"/>
</dbReference>
<dbReference type="GO" id="GO:0003968">
    <property type="term" value="F:RNA-directed RNA polymerase activity"/>
    <property type="evidence" value="ECO:0007669"/>
    <property type="project" value="UniProtKB-KW"/>
</dbReference>
<dbReference type="GO" id="GO:0005198">
    <property type="term" value="F:structural molecule activity"/>
    <property type="evidence" value="ECO:0007669"/>
    <property type="project" value="InterPro"/>
</dbReference>
<dbReference type="GO" id="GO:0006351">
    <property type="term" value="P:DNA-templated transcription"/>
    <property type="evidence" value="ECO:0007669"/>
    <property type="project" value="InterPro"/>
</dbReference>
<dbReference type="GO" id="GO:0034220">
    <property type="term" value="P:monoatomic ion transmembrane transport"/>
    <property type="evidence" value="ECO:0007669"/>
    <property type="project" value="UniProtKB-KW"/>
</dbReference>
<dbReference type="GO" id="GO:0006508">
    <property type="term" value="P:proteolysis"/>
    <property type="evidence" value="ECO:0007669"/>
    <property type="project" value="UniProtKB-KW"/>
</dbReference>
<dbReference type="GO" id="GO:0046718">
    <property type="term" value="P:symbiont entry into host cell"/>
    <property type="evidence" value="ECO:0007669"/>
    <property type="project" value="UniProtKB-KW"/>
</dbReference>
<dbReference type="GO" id="GO:0039545">
    <property type="term" value="P:symbiont-mediated suppression of host cytoplasmic pattern recognition receptor signaling pathway via inhibition of MAVS activity"/>
    <property type="evidence" value="ECO:0007669"/>
    <property type="project" value="UniProtKB-KW"/>
</dbReference>
<dbReference type="GO" id="GO:0039694">
    <property type="term" value="P:viral RNA genome replication"/>
    <property type="evidence" value="ECO:0007669"/>
    <property type="project" value="InterPro"/>
</dbReference>
<dbReference type="GO" id="GO:0019062">
    <property type="term" value="P:virion attachment to host cell"/>
    <property type="evidence" value="ECO:0007669"/>
    <property type="project" value="UniProtKB-KW"/>
</dbReference>
<dbReference type="CDD" id="cd23215">
    <property type="entry name" value="Hepatovirus_RdRp"/>
    <property type="match status" value="1"/>
</dbReference>
<dbReference type="CDD" id="cd00205">
    <property type="entry name" value="rhv_like"/>
    <property type="match status" value="2"/>
</dbReference>
<dbReference type="FunFam" id="2.60.120.20:FF:000016">
    <property type="entry name" value="Genome polyprotein"/>
    <property type="match status" value="1"/>
</dbReference>
<dbReference type="Gene3D" id="1.20.960.20">
    <property type="match status" value="1"/>
</dbReference>
<dbReference type="Gene3D" id="2.60.120.20">
    <property type="match status" value="3"/>
</dbReference>
<dbReference type="Gene3D" id="3.30.70.270">
    <property type="match status" value="1"/>
</dbReference>
<dbReference type="Gene3D" id="2.40.10.10">
    <property type="entry name" value="Trypsin-like serine proteases"/>
    <property type="match status" value="2"/>
</dbReference>
<dbReference type="InterPro" id="IPR049133">
    <property type="entry name" value="2B_soluble"/>
</dbReference>
<dbReference type="InterPro" id="IPR043502">
    <property type="entry name" value="DNA/RNA_pol_sf"/>
</dbReference>
<dbReference type="InterPro" id="IPR004004">
    <property type="entry name" value="Helic/Pol/Pept_Calicivir-typ"/>
</dbReference>
<dbReference type="InterPro" id="IPR000605">
    <property type="entry name" value="Helicase_SF3_ssDNA/RNA_vir"/>
</dbReference>
<dbReference type="InterPro" id="IPR014759">
    <property type="entry name" value="Helicase_SF3_ssRNA_vir"/>
</dbReference>
<dbReference type="InterPro" id="IPR024354">
    <property type="entry name" value="Hepatitis_A_VP1-2A"/>
</dbReference>
<dbReference type="InterPro" id="IPR044067">
    <property type="entry name" value="PCV_3C_PRO"/>
</dbReference>
<dbReference type="InterPro" id="IPR000199">
    <property type="entry name" value="Peptidase_C3A/C3B_picornavir"/>
</dbReference>
<dbReference type="InterPro" id="IPR009003">
    <property type="entry name" value="Peptidase_S1_PA"/>
</dbReference>
<dbReference type="InterPro" id="IPR043504">
    <property type="entry name" value="Peptidase_S1_PA_chymotrypsin"/>
</dbReference>
<dbReference type="InterPro" id="IPR001676">
    <property type="entry name" value="Picornavirus_capsid"/>
</dbReference>
<dbReference type="InterPro" id="IPR043128">
    <property type="entry name" value="Rev_trsase/Diguanyl_cyclase"/>
</dbReference>
<dbReference type="InterPro" id="IPR033703">
    <property type="entry name" value="Rhv-like"/>
</dbReference>
<dbReference type="InterPro" id="IPR001205">
    <property type="entry name" value="RNA-dir_pol_C"/>
</dbReference>
<dbReference type="InterPro" id="IPR007094">
    <property type="entry name" value="RNA-dir_pol_PSvirus"/>
</dbReference>
<dbReference type="InterPro" id="IPR029053">
    <property type="entry name" value="Viral_coat"/>
</dbReference>
<dbReference type="Pfam" id="PF20758">
    <property type="entry name" value="2B_soluble"/>
    <property type="match status" value="1"/>
</dbReference>
<dbReference type="Pfam" id="PF12944">
    <property type="entry name" value="HAV_VP"/>
    <property type="match status" value="1"/>
</dbReference>
<dbReference type="Pfam" id="PF00548">
    <property type="entry name" value="Peptidase_C3"/>
    <property type="match status" value="1"/>
</dbReference>
<dbReference type="Pfam" id="PF00680">
    <property type="entry name" value="RdRP_1"/>
    <property type="match status" value="1"/>
</dbReference>
<dbReference type="Pfam" id="PF00073">
    <property type="entry name" value="Rhv"/>
    <property type="match status" value="2"/>
</dbReference>
<dbReference type="Pfam" id="PF00910">
    <property type="entry name" value="RNA_helicase"/>
    <property type="match status" value="1"/>
</dbReference>
<dbReference type="PRINTS" id="PR00918">
    <property type="entry name" value="CALICVIRUSNS"/>
</dbReference>
<dbReference type="SUPFAM" id="SSF56672">
    <property type="entry name" value="DNA/RNA polymerases"/>
    <property type="match status" value="1"/>
</dbReference>
<dbReference type="SUPFAM" id="SSF88633">
    <property type="entry name" value="Positive stranded ssRNA viruses"/>
    <property type="match status" value="3"/>
</dbReference>
<dbReference type="SUPFAM" id="SSF50494">
    <property type="entry name" value="Trypsin-like serine proteases"/>
    <property type="match status" value="1"/>
</dbReference>
<dbReference type="PROSITE" id="PS51874">
    <property type="entry name" value="PCV_3C_PRO"/>
    <property type="match status" value="1"/>
</dbReference>
<dbReference type="PROSITE" id="PS50507">
    <property type="entry name" value="RDRP_SSRNA_POS"/>
    <property type="match status" value="1"/>
</dbReference>
<dbReference type="PROSITE" id="PS51218">
    <property type="entry name" value="SF3_HELICASE_2"/>
    <property type="match status" value="1"/>
</dbReference>
<proteinExistence type="inferred from homology"/>
<sequence length="2230" mass="251298">MFMMMNMSKQGIFQTVGSGLDHILSLADVEEEQMIQSVDRTAVTGASYFTSVDQSSVHTAEVGAHQTEPLKTSVDKPGSKKTQGEKFFLIHSADWLTTHALFHEVAKLDVVSLLYNEQFAVQGLLRYHTYARFGIEIQVQINPTPFQQGGLICAMVPGDQGYGSIASLTVYPHGLLNCNINNVVRIKVPFIYTRGAYHFKDPQYPVWELTIRVWSELNIGTGTSAYTSLNVLARFTDLELHGLTPLSTQMMRNEFRVSTTENVVNLSNYEDARAKMSFALDQEDWKTDPSQGGGIKITHFTTWTSIPTLAAQFAFNASASVGQQIKVIPVDPYFYQMTNSNPDQKCITALASVCQMFCFWRGDLVFDFQVFPTKYHSGRLLFCFVPGNELIDVSGITLKQATTAPCAVMDITGVQSTLRFRVPWISDTPYRVNRYTKSAHQKGEYTAIGKLIVYCYNRLTSPSNVASHVRVNVYLSAINLECFAPLYHAMDVTSQTGDDSGGFSTTVSTEQNAPDPQVGITTIKDLKGKANRGKMDVSGIQAPVGAITTIEDPVLAKKVPETFPELRPGESRHTSDHMSIYKFMGRSHFLCTFTFNANNREYTFPITLSSTSNPPHGLPSTLRWFFNLFQLYRGPLDLTIIITGATDVDGMAWFTPVGLAVDTPWVEKQSALTIDYKTALGAIRFNTRRTGNIQIRLPWYSYLYAVSGALDGLGDTTDSTFGLVSIQIANYNHSDEYLSFSCYLSVTEQSEFYFPRAPLNSNAMMVSESMLDRIASGDLESSVDDPRSAEDKRFESHIEQGKPYKELRMEVGKQRLKYAMEELSNEILPPPRKVKGLFSQAKISLFYTEDHEIVKLSWKGLTADTRALRRYGFSLAAGRSVWTLEMEAGVLTGRMIRLNDEKWTEIKDDKIVALVEKFTSNKNWSKVNFPHGMLDLEEIASNSKDFPNMSETDLCFLLHWLNPKKINLADRMLGLSGVQEIKEQGVGLIAECRTFLDSIAGTLKSMMFGFHQSVTVEIINTVLCFVKSGILLYVIQQLNQNEHSHIIGLLQVMNYADIGCSVISCGKIFSKMLETVFNWQMDSRMMALRTQSFSNWLRDICSGITIFKNFKDAIFWLYTKLKDYYDSNYGKKKDVLNVLKENQHRIEKAIEEADQFCVLQIQDVEKSEQYQKGVELIQKLRTVHSLAQVDSSLMSHLSPLRDCIARVHQKLKNLGSINQAMVTRCEPVVCYLYGKRGGGKSLTSIALATKICKHYGVEPEKNIYTKPVASDYWDGYSGQLVCIIDDIGQNTTDEDWSDFCQLVSGCPMRLNMASLEEKGRHFSSPFIIATSNWSNPSPKTVYVKEAIDRRLHYKIEVKPASFYKNAHNDMLNVNLARNNDAIKDMSCVDLLMDGHTVSLSELLNSLVMTVEIRKQNMSEFMKLWSQGVSDDDNDSAVAEFFQSFPSGEPSNSKLSSFFKAVTNHKWVAIGAAVGVLGVLVGGWFVYKHFTKEEPIPTEGVYHGVTKPKQVIKLDADPVDSQSTLEIAGLVRKNLVQFGVGEKNGCVRWVMNALGIKDDWLLVPSHAYKFEKDYQMMEFYFNRGGTYYSISAGNVVIQSLDVGFQDVVLMKVPTIPKFRDITEHFIKKNDVPRALNRLATLVTTVNGTPMLISEGPLKMEEKATYVHKRNDGTTVDLTVDQAWRGKGEGLPGMCGGALISSNQSIQNAILGIHVAGGNSILVAKLVTQEMFQNIEQKAIESQRIMKVEFTQCSMNVVSKTLFKKSPIHHHIDRNMINFPAVMPFSKAEIDPMAVMLSKYSLPIVEEPDDYKMASIYFQNKVMGKTFLVDDFLDIDMAITGAPGIDAINMDSSPGFPYVQEKLTKKDLIWLDENGLLLGVHPRLAQRILYNTVMMENCSDLDVVFTTCPKDELRPLDKVLESKTRAIDACPLDYTILCRIYWGPAISYFQLNPGFHTGVAIGIDPDRHWDELFKTMVRFGDVGLDLDFSSFDASLSPFMIREAGRILSEMSGTPSHFGEALINTIIYSKHLLYNCCYHVYGSMPSGSPCTALLNSIVNNVNLYYVFSKIFRKSPVFFGDALKILCYGDDVLIVFSRNVQIDNLESIGQKIVDEFGKLGMTATSADKSVPKLKPISELTFLKRSFNLVEDRIRPAISEKTIWSLVAWQRSNAEFEQNLENAQWFAFMHGFEFYQKFYHFVQSCLEKEMVEYRLKSYDWWRMKFYDQCFVCDLT</sequence>